<comment type="function">
    <text evidence="4">Beta-1,3-galactosyltransferase that transfers galactose from UDP-galactose to substrates with a terminal beta-N-acetylglucosamine (beta-GlcNAc) residue. Can also utilize substrates with a terminal galactose residue, albeit with lower efficiency. Involved in the biosynthesis of the carbohydrate moieties of glycolipids and glycoproteins.</text>
</comment>
<comment type="catalytic activity">
    <reaction evidence="4">
        <text>an N-acetyl-beta-D-glucosaminyl derivative + UDP-alpha-D-galactose = a beta-D-galactosyl-(1-&gt;3)-N-acetyl-beta-D-glucosaminyl derivative + UDP + H(+)</text>
        <dbReference type="Rhea" id="RHEA:53432"/>
        <dbReference type="ChEBI" id="CHEBI:15378"/>
        <dbReference type="ChEBI" id="CHEBI:58223"/>
        <dbReference type="ChEBI" id="CHEBI:61631"/>
        <dbReference type="ChEBI" id="CHEBI:66914"/>
        <dbReference type="ChEBI" id="CHEBI:133506"/>
        <dbReference type="EC" id="2.4.1.86"/>
    </reaction>
    <physiologicalReaction direction="left-to-right" evidence="4">
        <dbReference type="Rhea" id="RHEA:53433"/>
    </physiologicalReaction>
</comment>
<comment type="catalytic activity">
    <reaction evidence="1">
        <text>a beta-D-GlcNAc-(1-&gt;3)-beta-D-Gal-(1-&gt;4)-beta-D-Glc-(1&lt;-&gt;1)-Cer(d18:1(4E)) + UDP-alpha-D-galactose = a beta-D-Gal-(1-&gt;3)-beta-D-GlcNAc-(1-&gt;3)-beta-D-Gal-(1-&gt;4)-beta-D-Glc-(1&lt;-&gt;1')-Cer(d18:1(4E)) + UDP + H(+)</text>
        <dbReference type="Rhea" id="RHEA:16045"/>
        <dbReference type="ChEBI" id="CHEBI:15378"/>
        <dbReference type="ChEBI" id="CHEBI:17103"/>
        <dbReference type="ChEBI" id="CHEBI:17292"/>
        <dbReference type="ChEBI" id="CHEBI:58223"/>
        <dbReference type="ChEBI" id="CHEBI:66914"/>
        <dbReference type="EC" id="2.4.1.86"/>
    </reaction>
    <physiologicalReaction direction="left-to-right" evidence="1">
        <dbReference type="Rhea" id="RHEA:16046"/>
    </physiologicalReaction>
</comment>
<comment type="catalytic activity">
    <reaction evidence="1">
        <text>a neolactoside IV(3)-beta-GlcNAc-nLc4Cer(d18:1(4E)) + UDP-alpha-D-galactose = a neolactoside IV(3)-beta-[Gal-beta-(1-&gt;3)-GlcNAc]-nLc4Cer(d18:1(4E)) + UDP + H(+)</text>
        <dbReference type="Rhea" id="RHEA:41936"/>
        <dbReference type="ChEBI" id="CHEBI:15378"/>
        <dbReference type="ChEBI" id="CHEBI:58223"/>
        <dbReference type="ChEBI" id="CHEBI:66914"/>
        <dbReference type="ChEBI" id="CHEBI:78565"/>
        <dbReference type="ChEBI" id="CHEBI:142448"/>
    </reaction>
    <physiologicalReaction direction="left-to-right" evidence="1">
        <dbReference type="Rhea" id="RHEA:41937"/>
    </physiologicalReaction>
</comment>
<comment type="cofactor">
    <cofactor evidence="4">
        <name>Mn(2+)</name>
        <dbReference type="ChEBI" id="CHEBI:29035"/>
    </cofactor>
</comment>
<comment type="biophysicochemical properties">
    <kinetics>
        <KM evidence="4">0.6 mM for UDP-alpha-D-galactose</KM>
        <KM evidence="4">38.3 mM for GlcNAc-beta-pNP</KM>
    </kinetics>
</comment>
<comment type="pathway">
    <text>Protein modification; protein glycosylation.</text>
</comment>
<comment type="subcellular location">
    <subcellularLocation>
        <location evidence="6">Golgi apparatus membrane</location>
        <topology evidence="6">Single-pass type II membrane protein</topology>
    </subcellularLocation>
</comment>
<comment type="tissue specificity">
    <text evidence="4">Detected in brain and heart.</text>
</comment>
<comment type="similarity">
    <text evidence="6">Belongs to the glycosyltransferase 31 family.</text>
</comment>
<comment type="online information" name="Functional Glycomics Gateway - GTase">
    <link uri="http://www.functionalglycomics.org/glycomics/molecule/jsp/glycoEnzyme/viewGlycoEnzyme.jsp?gbpId=gt_mou_455"/>
    <text>b3GalT2</text>
</comment>
<evidence type="ECO:0000250" key="1">
    <source>
        <dbReference type="UniProtKB" id="O43825"/>
    </source>
</evidence>
<evidence type="ECO:0000255" key="2"/>
<evidence type="ECO:0000256" key="3">
    <source>
        <dbReference type="SAM" id="MobiDB-lite"/>
    </source>
</evidence>
<evidence type="ECO:0000269" key="4">
    <source>
    </source>
</evidence>
<evidence type="ECO:0000269" key="5">
    <source ref="4"/>
</evidence>
<evidence type="ECO:0000305" key="6"/>
<evidence type="ECO:0000312" key="7">
    <source>
        <dbReference type="MGI" id="MGI:1349461"/>
    </source>
</evidence>
<feature type="chain" id="PRO_0000219151" description="Beta-1,3-galactosyltransferase 2">
    <location>
        <begin position="1"/>
        <end position="422"/>
    </location>
</feature>
<feature type="topological domain" description="Cytoplasmic" evidence="2">
    <location>
        <begin position="1"/>
        <end position="20"/>
    </location>
</feature>
<feature type="transmembrane region" description="Helical; Signal-anchor for type II membrane protein" evidence="2">
    <location>
        <begin position="21"/>
        <end position="43"/>
    </location>
</feature>
<feature type="topological domain" description="Lumenal" evidence="2">
    <location>
        <begin position="44"/>
        <end position="422"/>
    </location>
</feature>
<feature type="region of interest" description="Disordered" evidence="3">
    <location>
        <begin position="91"/>
        <end position="110"/>
    </location>
</feature>
<feature type="compositionally biased region" description="Polar residues" evidence="3">
    <location>
        <begin position="95"/>
        <end position="110"/>
    </location>
</feature>
<feature type="glycosylation site" description="N-linked (GlcNAc...) asparagine" evidence="2">
    <location>
        <position position="75"/>
    </location>
</feature>
<feature type="glycosylation site" description="N-linked (GlcNAc...) asparagine" evidence="2">
    <location>
        <position position="98"/>
    </location>
</feature>
<feature type="glycosylation site" description="N-linked (GlcNAc...) asparagine" evidence="2">
    <location>
        <position position="119"/>
    </location>
</feature>
<feature type="glycosylation site" description="N-linked (GlcNAc...) asparagine" evidence="2">
    <location>
        <position position="176"/>
    </location>
</feature>
<feature type="glycosylation site" description="N-linked (GlcNAc...) asparagine" evidence="2">
    <location>
        <position position="226"/>
    </location>
</feature>
<feature type="sequence variant" description="In strain: HMI/Msf." evidence="5">
    <original>N</original>
    <variation>S</variation>
    <location>
        <position position="44"/>
    </location>
</feature>
<feature type="sequence variant" description="In strain: BLG2/Msf, MSM/Msf, SWN/Msf and NJL/Msf." evidence="5">
    <original>V</original>
    <variation>A</variation>
    <location>
        <position position="86"/>
    </location>
</feature>
<feature type="sequence variant" description="In strain: BLG2/Msf and NJL/Msf." evidence="5">
    <original>P</original>
    <variation>S</variation>
    <location>
        <position position="88"/>
    </location>
</feature>
<feature type="sequence variant" description="In strain: CAST/Ei and HMI/Msf." evidence="5">
    <original>S</original>
    <variation>T</variation>
    <location>
        <position position="100"/>
    </location>
</feature>
<feature type="sequence variant" description="In strain: BLG2/Msf, NJL/Msf, MSM/Msf and SWN/Msf." evidence="5">
    <original>N</original>
    <variation>D</variation>
    <location>
        <position position="124"/>
    </location>
</feature>
<feature type="sequence conflict" description="In Ref. 1; AAC53524." evidence="6" ref="1">
    <original>T</original>
    <variation>I</variation>
    <location>
        <position position="95"/>
    </location>
</feature>
<feature type="sequence conflict" description="In Ref. 2; BAC28688." evidence="6" ref="2">
    <original>H</original>
    <variation>R</variation>
    <location>
        <position position="366"/>
    </location>
</feature>
<keyword id="KW-0325">Glycoprotein</keyword>
<keyword id="KW-0328">Glycosyltransferase</keyword>
<keyword id="KW-0333">Golgi apparatus</keyword>
<keyword id="KW-0443">Lipid metabolism</keyword>
<keyword id="KW-0464">Manganese</keyword>
<keyword id="KW-0472">Membrane</keyword>
<keyword id="KW-1185">Reference proteome</keyword>
<keyword id="KW-0735">Signal-anchor</keyword>
<keyword id="KW-0808">Transferase</keyword>
<keyword id="KW-0812">Transmembrane</keyword>
<keyword id="KW-1133">Transmembrane helix</keyword>
<name>B3GT2_MOUSE</name>
<gene>
    <name evidence="7" type="primary">B3galt2</name>
</gene>
<reference key="1">
    <citation type="journal article" date="1998" name="J. Biol. Chem.">
        <title>Genomic cloning and expression of three murine UDP-galactose: beta-N-acetylglucosamine beta1,3-galactosyltransferase genes.</title>
        <authorList>
            <person name="Hennet T."/>
            <person name="Dinter A."/>
            <person name="Kuhnert P."/>
            <person name="Mattu T.S."/>
            <person name="Rudd P.M."/>
            <person name="Berger E.G."/>
        </authorList>
    </citation>
    <scope>NUCLEOTIDE SEQUENCE [GENOMIC DNA]</scope>
    <scope>FUNCTION</scope>
    <scope>CATALYTIC ACTIVITY</scope>
    <scope>COFACTOR</scope>
    <scope>TISSUE SPECIFICITY</scope>
    <scope>BIOPHYSICOCHEMICAL PROPERTIES</scope>
    <source>
        <strain>129/SvJ</strain>
    </source>
</reference>
<reference key="2">
    <citation type="journal article" date="2005" name="Science">
        <title>The transcriptional landscape of the mammalian genome.</title>
        <authorList>
            <person name="Carninci P."/>
            <person name="Kasukawa T."/>
            <person name="Katayama S."/>
            <person name="Gough J."/>
            <person name="Frith M.C."/>
            <person name="Maeda N."/>
            <person name="Oyama R."/>
            <person name="Ravasi T."/>
            <person name="Lenhard B."/>
            <person name="Wells C."/>
            <person name="Kodzius R."/>
            <person name="Shimokawa K."/>
            <person name="Bajic V.B."/>
            <person name="Brenner S.E."/>
            <person name="Batalov S."/>
            <person name="Forrest A.R."/>
            <person name="Zavolan M."/>
            <person name="Davis M.J."/>
            <person name="Wilming L.G."/>
            <person name="Aidinis V."/>
            <person name="Allen J.E."/>
            <person name="Ambesi-Impiombato A."/>
            <person name="Apweiler R."/>
            <person name="Aturaliya R.N."/>
            <person name="Bailey T.L."/>
            <person name="Bansal M."/>
            <person name="Baxter L."/>
            <person name="Beisel K.W."/>
            <person name="Bersano T."/>
            <person name="Bono H."/>
            <person name="Chalk A.M."/>
            <person name="Chiu K.P."/>
            <person name="Choudhary V."/>
            <person name="Christoffels A."/>
            <person name="Clutterbuck D.R."/>
            <person name="Crowe M.L."/>
            <person name="Dalla E."/>
            <person name="Dalrymple B.P."/>
            <person name="de Bono B."/>
            <person name="Della Gatta G."/>
            <person name="di Bernardo D."/>
            <person name="Down T."/>
            <person name="Engstrom P."/>
            <person name="Fagiolini M."/>
            <person name="Faulkner G."/>
            <person name="Fletcher C.F."/>
            <person name="Fukushima T."/>
            <person name="Furuno M."/>
            <person name="Futaki S."/>
            <person name="Gariboldi M."/>
            <person name="Georgii-Hemming P."/>
            <person name="Gingeras T.R."/>
            <person name="Gojobori T."/>
            <person name="Green R.E."/>
            <person name="Gustincich S."/>
            <person name="Harbers M."/>
            <person name="Hayashi Y."/>
            <person name="Hensch T.K."/>
            <person name="Hirokawa N."/>
            <person name="Hill D."/>
            <person name="Huminiecki L."/>
            <person name="Iacono M."/>
            <person name="Ikeo K."/>
            <person name="Iwama A."/>
            <person name="Ishikawa T."/>
            <person name="Jakt M."/>
            <person name="Kanapin A."/>
            <person name="Katoh M."/>
            <person name="Kawasawa Y."/>
            <person name="Kelso J."/>
            <person name="Kitamura H."/>
            <person name="Kitano H."/>
            <person name="Kollias G."/>
            <person name="Krishnan S.P."/>
            <person name="Kruger A."/>
            <person name="Kummerfeld S.K."/>
            <person name="Kurochkin I.V."/>
            <person name="Lareau L.F."/>
            <person name="Lazarevic D."/>
            <person name="Lipovich L."/>
            <person name="Liu J."/>
            <person name="Liuni S."/>
            <person name="McWilliam S."/>
            <person name="Madan Babu M."/>
            <person name="Madera M."/>
            <person name="Marchionni L."/>
            <person name="Matsuda H."/>
            <person name="Matsuzawa S."/>
            <person name="Miki H."/>
            <person name="Mignone F."/>
            <person name="Miyake S."/>
            <person name="Morris K."/>
            <person name="Mottagui-Tabar S."/>
            <person name="Mulder N."/>
            <person name="Nakano N."/>
            <person name="Nakauchi H."/>
            <person name="Ng P."/>
            <person name="Nilsson R."/>
            <person name="Nishiguchi S."/>
            <person name="Nishikawa S."/>
            <person name="Nori F."/>
            <person name="Ohara O."/>
            <person name="Okazaki Y."/>
            <person name="Orlando V."/>
            <person name="Pang K.C."/>
            <person name="Pavan W.J."/>
            <person name="Pavesi G."/>
            <person name="Pesole G."/>
            <person name="Petrovsky N."/>
            <person name="Piazza S."/>
            <person name="Reed J."/>
            <person name="Reid J.F."/>
            <person name="Ring B.Z."/>
            <person name="Ringwald M."/>
            <person name="Rost B."/>
            <person name="Ruan Y."/>
            <person name="Salzberg S.L."/>
            <person name="Sandelin A."/>
            <person name="Schneider C."/>
            <person name="Schoenbach C."/>
            <person name="Sekiguchi K."/>
            <person name="Semple C.A."/>
            <person name="Seno S."/>
            <person name="Sessa L."/>
            <person name="Sheng Y."/>
            <person name="Shibata Y."/>
            <person name="Shimada H."/>
            <person name="Shimada K."/>
            <person name="Silva D."/>
            <person name="Sinclair B."/>
            <person name="Sperling S."/>
            <person name="Stupka E."/>
            <person name="Sugiura K."/>
            <person name="Sultana R."/>
            <person name="Takenaka Y."/>
            <person name="Taki K."/>
            <person name="Tammoja K."/>
            <person name="Tan S.L."/>
            <person name="Tang S."/>
            <person name="Taylor M.S."/>
            <person name="Tegner J."/>
            <person name="Teichmann S.A."/>
            <person name="Ueda H.R."/>
            <person name="van Nimwegen E."/>
            <person name="Verardo R."/>
            <person name="Wei C.L."/>
            <person name="Yagi K."/>
            <person name="Yamanishi H."/>
            <person name="Zabarovsky E."/>
            <person name="Zhu S."/>
            <person name="Zimmer A."/>
            <person name="Hide W."/>
            <person name="Bult C."/>
            <person name="Grimmond S.M."/>
            <person name="Teasdale R.D."/>
            <person name="Liu E.T."/>
            <person name="Brusic V."/>
            <person name="Quackenbush J."/>
            <person name="Wahlestedt C."/>
            <person name="Mattick J.S."/>
            <person name="Hume D.A."/>
            <person name="Kai C."/>
            <person name="Sasaki D."/>
            <person name="Tomaru Y."/>
            <person name="Fukuda S."/>
            <person name="Kanamori-Katayama M."/>
            <person name="Suzuki M."/>
            <person name="Aoki J."/>
            <person name="Arakawa T."/>
            <person name="Iida J."/>
            <person name="Imamura K."/>
            <person name="Itoh M."/>
            <person name="Kato T."/>
            <person name="Kawaji H."/>
            <person name="Kawagashira N."/>
            <person name="Kawashima T."/>
            <person name="Kojima M."/>
            <person name="Kondo S."/>
            <person name="Konno H."/>
            <person name="Nakano K."/>
            <person name="Ninomiya N."/>
            <person name="Nishio T."/>
            <person name="Okada M."/>
            <person name="Plessy C."/>
            <person name="Shibata K."/>
            <person name="Shiraki T."/>
            <person name="Suzuki S."/>
            <person name="Tagami M."/>
            <person name="Waki K."/>
            <person name="Watahiki A."/>
            <person name="Okamura-Oho Y."/>
            <person name="Suzuki H."/>
            <person name="Kawai J."/>
            <person name="Hayashizaki Y."/>
        </authorList>
    </citation>
    <scope>NUCLEOTIDE SEQUENCE [LARGE SCALE MRNA]</scope>
    <source>
        <strain>C57BL/6J</strain>
        <tissue>Cerebellum</tissue>
        <tissue>Diencephalon</tissue>
        <tissue>Hippocampus</tissue>
    </source>
</reference>
<reference key="3">
    <citation type="journal article" date="2004" name="Genome Res.">
        <title>The status, quality, and expansion of the NIH full-length cDNA project: the Mammalian Gene Collection (MGC).</title>
        <authorList>
            <consortium name="The MGC Project Team"/>
        </authorList>
    </citation>
    <scope>NUCLEOTIDE SEQUENCE [LARGE SCALE MRNA]</scope>
    <source>
        <tissue>Olfactory epithelium</tissue>
    </source>
</reference>
<reference key="4">
    <citation type="submission" date="2000-02" db="EMBL/GenBank/DDBJ databases">
        <title>Conspicuous differences among gene genealogies of 21 nuclear genes of five Mus musculus subspecies.</title>
        <authorList>
            <person name="Liu Y."/>
            <person name="Kitano T."/>
            <person name="Koide T."/>
            <person name="Shiroishi T."/>
            <person name="Moriwaki K."/>
            <person name="Saitou N."/>
        </authorList>
    </citation>
    <scope>NUCLEOTIDE SEQUENCE [GENOMIC DNA] OF 7-415</scope>
    <scope>VARIANTS SER-44; ALA-86; SER-88; THR-100 AND ASP-124</scope>
    <source>
        <strain>BFM/2Msf</strain>
        <strain>BLG2/Msf</strain>
        <strain>C57BL/10SnJ</strain>
        <strain>CAST/EiJ</strain>
        <strain>HMI/Msf</strain>
        <strain>MSM/Msf</strain>
        <strain>NJL/Msf</strain>
        <strain>Pgn2</strain>
        <strain>SWN/Msf</strain>
    </source>
</reference>
<protein>
    <recommendedName>
        <fullName evidence="6">Beta-1,3-galactosyltransferase 2</fullName>
        <shortName>Beta-1,3-GalTase 2</shortName>
        <shortName>Beta3Gal-T2</shortName>
        <shortName>Beta3GalT2</shortName>
        <ecNumber evidence="4">2.4.1.86</ecNumber>
    </recommendedName>
    <alternativeName>
        <fullName>UDP-Gal:betaGlcNAc beta 1,3-galactosyltransferase-II</fullName>
    </alternativeName>
</protein>
<dbReference type="EC" id="2.4.1.86" evidence="4"/>
<dbReference type="EMBL" id="AF029791">
    <property type="protein sequence ID" value="AAC53524.1"/>
    <property type="molecule type" value="Genomic_DNA"/>
</dbReference>
<dbReference type="EMBL" id="AK034371">
    <property type="protein sequence ID" value="BAC28688.1"/>
    <property type="molecule type" value="mRNA"/>
</dbReference>
<dbReference type="EMBL" id="AK036141">
    <property type="protein sequence ID" value="BAC29317.1"/>
    <property type="molecule type" value="mRNA"/>
</dbReference>
<dbReference type="EMBL" id="AK083168">
    <property type="protein sequence ID" value="BAC38793.1"/>
    <property type="molecule type" value="mRNA"/>
</dbReference>
<dbReference type="EMBL" id="BC046322">
    <property type="protein sequence ID" value="AAH46322.1"/>
    <property type="molecule type" value="mRNA"/>
</dbReference>
<dbReference type="EMBL" id="AB039144">
    <property type="protein sequence ID" value="BAB68668.1"/>
    <property type="molecule type" value="Genomic_DNA"/>
</dbReference>
<dbReference type="EMBL" id="AB039145">
    <property type="protein sequence ID" value="BAB68669.1"/>
    <property type="molecule type" value="Genomic_DNA"/>
</dbReference>
<dbReference type="EMBL" id="AB039146">
    <property type="protein sequence ID" value="BAB68670.1"/>
    <property type="molecule type" value="Genomic_DNA"/>
</dbReference>
<dbReference type="EMBL" id="AB039147">
    <property type="protein sequence ID" value="BAB68671.1"/>
    <property type="molecule type" value="Genomic_DNA"/>
</dbReference>
<dbReference type="EMBL" id="AB039148">
    <property type="protein sequence ID" value="BAB68672.1"/>
    <property type="molecule type" value="Genomic_DNA"/>
</dbReference>
<dbReference type="EMBL" id="AB039149">
    <property type="protein sequence ID" value="BAB68673.1"/>
    <property type="molecule type" value="Genomic_DNA"/>
</dbReference>
<dbReference type="EMBL" id="AB039150">
    <property type="protein sequence ID" value="BAB68674.1"/>
    <property type="molecule type" value="Genomic_DNA"/>
</dbReference>
<dbReference type="EMBL" id="AB039151">
    <property type="protein sequence ID" value="BAB68675.1"/>
    <property type="molecule type" value="Genomic_DNA"/>
</dbReference>
<dbReference type="EMBL" id="AB039152">
    <property type="protein sequence ID" value="BAB68676.1"/>
    <property type="molecule type" value="Genomic_DNA"/>
</dbReference>
<dbReference type="CCDS" id="CCDS15342.1"/>
<dbReference type="RefSeq" id="NP_064409.3">
    <property type="nucleotide sequence ID" value="NM_020025.4"/>
</dbReference>
<dbReference type="SMR" id="O54905"/>
<dbReference type="BioGRID" id="205036">
    <property type="interactions" value="2"/>
</dbReference>
<dbReference type="FunCoup" id="O54905">
    <property type="interactions" value="272"/>
</dbReference>
<dbReference type="IntAct" id="O54905">
    <property type="interactions" value="1"/>
</dbReference>
<dbReference type="STRING" id="10090.ENSMUSP00000046118"/>
<dbReference type="CAZy" id="GT31">
    <property type="family name" value="Glycosyltransferase Family 31"/>
</dbReference>
<dbReference type="GlyCosmos" id="O54905">
    <property type="glycosylation" value="5 sites, No reported glycans"/>
</dbReference>
<dbReference type="GlyGen" id="O54905">
    <property type="glycosylation" value="5 sites, 1 N-linked glycan (1 site)"/>
</dbReference>
<dbReference type="iPTMnet" id="O54905"/>
<dbReference type="PhosphoSitePlus" id="O54905"/>
<dbReference type="PaxDb" id="10090-ENSMUSP00000046118"/>
<dbReference type="ProteomicsDB" id="265193"/>
<dbReference type="Antibodypedia" id="34468">
    <property type="antibodies" value="162 antibodies from 26 providers"/>
</dbReference>
<dbReference type="DNASU" id="26878"/>
<dbReference type="Ensembl" id="ENSMUST00000038252.4">
    <property type="protein sequence ID" value="ENSMUSP00000046118.3"/>
    <property type="gene ID" value="ENSMUSG00000033849.4"/>
</dbReference>
<dbReference type="GeneID" id="26878"/>
<dbReference type="KEGG" id="mmu:26878"/>
<dbReference type="UCSC" id="uc007cwy.2">
    <property type="organism name" value="mouse"/>
</dbReference>
<dbReference type="AGR" id="MGI:1349461"/>
<dbReference type="CTD" id="8707"/>
<dbReference type="MGI" id="MGI:1349461">
    <property type="gene designation" value="B3galt2"/>
</dbReference>
<dbReference type="VEuPathDB" id="HostDB:ENSMUSG00000033849"/>
<dbReference type="eggNOG" id="KOG2287">
    <property type="taxonomic scope" value="Eukaryota"/>
</dbReference>
<dbReference type="GeneTree" id="ENSGT00940000155117"/>
<dbReference type="HOGENOM" id="CLU_036849_2_1_1"/>
<dbReference type="InParanoid" id="O54905"/>
<dbReference type="OMA" id="TSYHFKY"/>
<dbReference type="OrthoDB" id="5512589at2759"/>
<dbReference type="PhylomeDB" id="O54905"/>
<dbReference type="TreeFam" id="TF318639"/>
<dbReference type="Reactome" id="R-MMU-9037629">
    <property type="pathway name" value="Lewis blood group biosynthesis"/>
</dbReference>
<dbReference type="UniPathway" id="UPA00378"/>
<dbReference type="BioGRID-ORCS" id="26878">
    <property type="hits" value="1 hit in 78 CRISPR screens"/>
</dbReference>
<dbReference type="PRO" id="PR:O54905"/>
<dbReference type="Proteomes" id="UP000000589">
    <property type="component" value="Chromosome 1"/>
</dbReference>
<dbReference type="RNAct" id="O54905">
    <property type="molecule type" value="protein"/>
</dbReference>
<dbReference type="Bgee" id="ENSMUSG00000033849">
    <property type="expression patterns" value="Expressed in epididymal fat pad and 162 other cell types or tissues"/>
</dbReference>
<dbReference type="GO" id="GO:0000139">
    <property type="term" value="C:Golgi membrane"/>
    <property type="evidence" value="ECO:0007669"/>
    <property type="project" value="UniProtKB-SubCell"/>
</dbReference>
<dbReference type="GO" id="GO:0008499">
    <property type="term" value="F:N-acetyl-beta-D-glucosaminide beta-(1,3)-galactosyltransferase activity"/>
    <property type="evidence" value="ECO:0000314"/>
    <property type="project" value="MGI"/>
</dbReference>
<dbReference type="GO" id="GO:0006682">
    <property type="term" value="P:galactosylceramide biosynthetic process"/>
    <property type="evidence" value="ECO:0007669"/>
    <property type="project" value="Ensembl"/>
</dbReference>
<dbReference type="GO" id="GO:0009312">
    <property type="term" value="P:oligosaccharide biosynthetic process"/>
    <property type="evidence" value="ECO:0000314"/>
    <property type="project" value="MGI"/>
</dbReference>
<dbReference type="GO" id="GO:0006486">
    <property type="term" value="P:protein glycosylation"/>
    <property type="evidence" value="ECO:0007669"/>
    <property type="project" value="UniProtKB-UniPathway"/>
</dbReference>
<dbReference type="FunFam" id="3.90.550.50:FF:000001">
    <property type="entry name" value="Hexosyltransferase"/>
    <property type="match status" value="1"/>
</dbReference>
<dbReference type="Gene3D" id="3.90.550.50">
    <property type="match status" value="1"/>
</dbReference>
<dbReference type="InterPro" id="IPR045821">
    <property type="entry name" value="B3GT2_N"/>
</dbReference>
<dbReference type="InterPro" id="IPR002659">
    <property type="entry name" value="Glyco_trans_31"/>
</dbReference>
<dbReference type="PANTHER" id="PTHR11214:SF19">
    <property type="entry name" value="BETA-1,3-GALACTOSYLTRANSFERASE 2"/>
    <property type="match status" value="1"/>
</dbReference>
<dbReference type="PANTHER" id="PTHR11214">
    <property type="entry name" value="BETA-1,3-N-ACETYLGLUCOSAMINYLTRANSFERASE"/>
    <property type="match status" value="1"/>
</dbReference>
<dbReference type="Pfam" id="PF19341">
    <property type="entry name" value="B3GALT2_N"/>
    <property type="match status" value="1"/>
</dbReference>
<dbReference type="Pfam" id="PF01762">
    <property type="entry name" value="Galactosyl_T"/>
    <property type="match status" value="1"/>
</dbReference>
<sequence>MLQWRRRHCCFAKMTWSPKRSLLRTPLTGVLSLVFLFAMFLFFNHHDWLPGRPGFKENPVTYTFRGFRSTKSETNHSSLRTIWKEVAPQTLRPHTASNSSNTELSPQGVTGLQNTLSANGSIYNEKGTGHPNSYHFKYIINEPEKCQEKSPFLILLIAAEPGQIEARRAIRQTWGNETLAPGIQIIRVFLLGISIKLNGYLQHAIQEESRQYHDIIQQEYLDTYYNLTIKTLMGMNWVATYCPHTPYVMKTDSDMFVNTEYLIHKLLKPDLPPRHNYFTGYLMRGYAPNRNKDSKWYMPPDLYPSERYPVFCSGTGYVFSGDLAEKIFKVSLGIRRLHLEDVYVGICLAKLRVDPVPPPNEFVFNHWRVSYSSCKYSHLITSHQFQPSELIKYWNHLQQNKHNACANAAKEKAGRYRHRKLH</sequence>
<proteinExistence type="evidence at protein level"/>
<accession>O54905</accession>
<accession>Q8BH19</accession>
<accession>Q8CBX4</accession>
<accession>Q91V19</accession>
<accession>Q91V58</accession>
<accession>Q91VE9</accession>
<accession>Q920V3</accession>
<accession>Q920V4</accession>
<organism>
    <name type="scientific">Mus musculus</name>
    <name type="common">Mouse</name>
    <dbReference type="NCBI Taxonomy" id="10090"/>
    <lineage>
        <taxon>Eukaryota</taxon>
        <taxon>Metazoa</taxon>
        <taxon>Chordata</taxon>
        <taxon>Craniata</taxon>
        <taxon>Vertebrata</taxon>
        <taxon>Euteleostomi</taxon>
        <taxon>Mammalia</taxon>
        <taxon>Eutheria</taxon>
        <taxon>Euarchontoglires</taxon>
        <taxon>Glires</taxon>
        <taxon>Rodentia</taxon>
        <taxon>Myomorpha</taxon>
        <taxon>Muroidea</taxon>
        <taxon>Muridae</taxon>
        <taxon>Murinae</taxon>
        <taxon>Mus</taxon>
        <taxon>Mus</taxon>
    </lineage>
</organism>